<organism>
    <name type="scientific">Psychromonas ingrahamii (strain DSM 17664 / CCUG 51855 / 37)</name>
    <dbReference type="NCBI Taxonomy" id="357804"/>
    <lineage>
        <taxon>Bacteria</taxon>
        <taxon>Pseudomonadati</taxon>
        <taxon>Pseudomonadota</taxon>
        <taxon>Gammaproteobacteria</taxon>
        <taxon>Alteromonadales</taxon>
        <taxon>Psychromonadaceae</taxon>
        <taxon>Psychromonas</taxon>
    </lineage>
</organism>
<dbReference type="EC" id="5.3.1.6" evidence="1"/>
<dbReference type="EMBL" id="CP000510">
    <property type="protein sequence ID" value="ABM02455.1"/>
    <property type="molecule type" value="Genomic_DNA"/>
</dbReference>
<dbReference type="RefSeq" id="WP_011769014.1">
    <property type="nucleotide sequence ID" value="NC_008709.1"/>
</dbReference>
<dbReference type="SMR" id="A1SSJ0"/>
<dbReference type="STRING" id="357804.Ping_0601"/>
<dbReference type="KEGG" id="pin:Ping_0601"/>
<dbReference type="eggNOG" id="COG0120">
    <property type="taxonomic scope" value="Bacteria"/>
</dbReference>
<dbReference type="HOGENOM" id="CLU_056590_1_1_6"/>
<dbReference type="OrthoDB" id="5870696at2"/>
<dbReference type="UniPathway" id="UPA00115">
    <property type="reaction ID" value="UER00412"/>
</dbReference>
<dbReference type="Proteomes" id="UP000000639">
    <property type="component" value="Chromosome"/>
</dbReference>
<dbReference type="GO" id="GO:0005829">
    <property type="term" value="C:cytosol"/>
    <property type="evidence" value="ECO:0007669"/>
    <property type="project" value="TreeGrafter"/>
</dbReference>
<dbReference type="GO" id="GO:0004751">
    <property type="term" value="F:ribose-5-phosphate isomerase activity"/>
    <property type="evidence" value="ECO:0007669"/>
    <property type="project" value="UniProtKB-UniRule"/>
</dbReference>
<dbReference type="GO" id="GO:0006014">
    <property type="term" value="P:D-ribose metabolic process"/>
    <property type="evidence" value="ECO:0007669"/>
    <property type="project" value="TreeGrafter"/>
</dbReference>
<dbReference type="GO" id="GO:0009052">
    <property type="term" value="P:pentose-phosphate shunt, non-oxidative branch"/>
    <property type="evidence" value="ECO:0007669"/>
    <property type="project" value="UniProtKB-UniRule"/>
</dbReference>
<dbReference type="CDD" id="cd01398">
    <property type="entry name" value="RPI_A"/>
    <property type="match status" value="1"/>
</dbReference>
<dbReference type="FunFam" id="3.30.70.260:FF:000004">
    <property type="entry name" value="Ribose-5-phosphate isomerase A"/>
    <property type="match status" value="1"/>
</dbReference>
<dbReference type="FunFam" id="3.40.50.1360:FF:000001">
    <property type="entry name" value="Ribose-5-phosphate isomerase A"/>
    <property type="match status" value="1"/>
</dbReference>
<dbReference type="Gene3D" id="3.30.70.260">
    <property type="match status" value="1"/>
</dbReference>
<dbReference type="Gene3D" id="3.40.50.1360">
    <property type="match status" value="1"/>
</dbReference>
<dbReference type="HAMAP" id="MF_00170">
    <property type="entry name" value="Rib_5P_isom_A"/>
    <property type="match status" value="1"/>
</dbReference>
<dbReference type="InterPro" id="IPR037171">
    <property type="entry name" value="NagB/RpiA_transferase-like"/>
</dbReference>
<dbReference type="InterPro" id="IPR020672">
    <property type="entry name" value="Ribose5P_isomerase_typA_subgr"/>
</dbReference>
<dbReference type="InterPro" id="IPR004788">
    <property type="entry name" value="Ribose5P_isomerase_type_A"/>
</dbReference>
<dbReference type="NCBIfam" id="NF001924">
    <property type="entry name" value="PRK00702.1"/>
    <property type="match status" value="1"/>
</dbReference>
<dbReference type="NCBIfam" id="TIGR00021">
    <property type="entry name" value="rpiA"/>
    <property type="match status" value="1"/>
</dbReference>
<dbReference type="PANTHER" id="PTHR11934">
    <property type="entry name" value="RIBOSE-5-PHOSPHATE ISOMERASE"/>
    <property type="match status" value="1"/>
</dbReference>
<dbReference type="PANTHER" id="PTHR11934:SF0">
    <property type="entry name" value="RIBOSE-5-PHOSPHATE ISOMERASE"/>
    <property type="match status" value="1"/>
</dbReference>
<dbReference type="Pfam" id="PF06026">
    <property type="entry name" value="Rib_5-P_isom_A"/>
    <property type="match status" value="1"/>
</dbReference>
<dbReference type="SUPFAM" id="SSF75445">
    <property type="entry name" value="D-ribose-5-phosphate isomerase (RpiA), lid domain"/>
    <property type="match status" value="1"/>
</dbReference>
<dbReference type="SUPFAM" id="SSF100950">
    <property type="entry name" value="NagB/RpiA/CoA transferase-like"/>
    <property type="match status" value="1"/>
</dbReference>
<evidence type="ECO:0000255" key="1">
    <source>
        <dbReference type="HAMAP-Rule" id="MF_00170"/>
    </source>
</evidence>
<gene>
    <name evidence="1" type="primary">rpiA</name>
    <name type="ordered locus">Ping_0601</name>
</gene>
<proteinExistence type="inferred from homology"/>
<comment type="function">
    <text evidence="1">Catalyzes the reversible conversion of ribose-5-phosphate to ribulose 5-phosphate.</text>
</comment>
<comment type="catalytic activity">
    <reaction evidence="1">
        <text>aldehydo-D-ribose 5-phosphate = D-ribulose 5-phosphate</text>
        <dbReference type="Rhea" id="RHEA:14657"/>
        <dbReference type="ChEBI" id="CHEBI:58121"/>
        <dbReference type="ChEBI" id="CHEBI:58273"/>
        <dbReference type="EC" id="5.3.1.6"/>
    </reaction>
</comment>
<comment type="pathway">
    <text evidence="1">Carbohydrate degradation; pentose phosphate pathway; D-ribose 5-phosphate from D-ribulose 5-phosphate (non-oxidative stage): step 1/1.</text>
</comment>
<comment type="subunit">
    <text evidence="1">Homodimer.</text>
</comment>
<comment type="similarity">
    <text evidence="1">Belongs to the ribose 5-phosphate isomerase family.</text>
</comment>
<sequence length="218" mass="23258">MTQDEMKKAAAYAALEYVQPDSIVGVGTGSTVTHFIDALATIKDLIKGAVSSSDESTARLQSYGIDVFDLNEVSELSIYVDGADEINPYNHMIKGGGAALTREKIISAVAEKFICIVDNTKNVDILGDFPLPIEVIPMARSYVARELVKLGGDPVYRQGVVTDNGNVILDVHNLKIAEPLKLEAQINAIVGVVTNGLFANRAADVVLVGTPEGVKTLK</sequence>
<reference key="1">
    <citation type="journal article" date="2008" name="BMC Genomics">
        <title>Genomics of an extreme psychrophile, Psychromonas ingrahamii.</title>
        <authorList>
            <person name="Riley M."/>
            <person name="Staley J.T."/>
            <person name="Danchin A."/>
            <person name="Wang T.Z."/>
            <person name="Brettin T.S."/>
            <person name="Hauser L.J."/>
            <person name="Land M.L."/>
            <person name="Thompson L.S."/>
        </authorList>
    </citation>
    <scope>NUCLEOTIDE SEQUENCE [LARGE SCALE GENOMIC DNA]</scope>
    <source>
        <strain>DSM 17664 / CCUG 51855 / 37</strain>
    </source>
</reference>
<feature type="chain" id="PRO_1000016970" description="Ribose-5-phosphate isomerase A">
    <location>
        <begin position="1"/>
        <end position="218"/>
    </location>
</feature>
<feature type="active site" description="Proton acceptor" evidence="1">
    <location>
        <position position="103"/>
    </location>
</feature>
<feature type="binding site" evidence="1">
    <location>
        <begin position="28"/>
        <end position="31"/>
    </location>
    <ligand>
        <name>substrate</name>
    </ligand>
</feature>
<feature type="binding site" evidence="1">
    <location>
        <begin position="81"/>
        <end position="84"/>
    </location>
    <ligand>
        <name>substrate</name>
    </ligand>
</feature>
<feature type="binding site" evidence="1">
    <location>
        <begin position="94"/>
        <end position="97"/>
    </location>
    <ligand>
        <name>substrate</name>
    </ligand>
</feature>
<feature type="binding site" evidence="1">
    <location>
        <position position="121"/>
    </location>
    <ligand>
        <name>substrate</name>
    </ligand>
</feature>
<accession>A1SSJ0</accession>
<name>RPIA_PSYIN</name>
<protein>
    <recommendedName>
        <fullName evidence="1">Ribose-5-phosphate isomerase A</fullName>
        <ecNumber evidence="1">5.3.1.6</ecNumber>
    </recommendedName>
    <alternativeName>
        <fullName evidence="1">Phosphoriboisomerase A</fullName>
        <shortName evidence="1">PRI</shortName>
    </alternativeName>
</protein>
<keyword id="KW-0413">Isomerase</keyword>
<keyword id="KW-1185">Reference proteome</keyword>